<comment type="function">
    <text evidence="1">Catalyzes the conversion of UDP-4-keto-arabinose (UDP-Ara4O) to UDP-4-amino-4-deoxy-L-arabinose (UDP-L-Ara4N). The modified arabinose is attached to lipid A and is required for resistance to polymyxin and cationic antimicrobial peptides.</text>
</comment>
<comment type="catalytic activity">
    <reaction evidence="1">
        <text>UDP-4-amino-4-deoxy-beta-L-arabinose + 2-oxoglutarate = UDP-beta-L-threo-pentopyranos-4-ulose + L-glutamate</text>
        <dbReference type="Rhea" id="RHEA:24710"/>
        <dbReference type="ChEBI" id="CHEBI:16810"/>
        <dbReference type="ChEBI" id="CHEBI:29985"/>
        <dbReference type="ChEBI" id="CHEBI:58708"/>
        <dbReference type="ChEBI" id="CHEBI:58710"/>
        <dbReference type="EC" id="2.6.1.87"/>
    </reaction>
</comment>
<comment type="cofactor">
    <cofactor evidence="1">
        <name>pyridoxal 5'-phosphate</name>
        <dbReference type="ChEBI" id="CHEBI:597326"/>
    </cofactor>
</comment>
<comment type="pathway">
    <text evidence="1">Nucleotide-sugar biosynthesis; UDP-4-deoxy-4-formamido-beta-L-arabinose biosynthesis; UDP-4-deoxy-4-formamido-beta-L-arabinose from UDP-alpha-D-glucuronate: step 2/3.</text>
</comment>
<comment type="pathway">
    <text evidence="1">Bacterial outer membrane biogenesis; lipopolysaccharide biosynthesis.</text>
</comment>
<comment type="subunit">
    <text evidence="1">Homodimer.</text>
</comment>
<comment type="similarity">
    <text evidence="1">Belongs to the DegT/DnrJ/EryC1 family. ArnB subfamily.</text>
</comment>
<comment type="sequence caution" evidence="2">
    <conflict type="erroneous initiation">
        <sequence resource="EMBL-CDS" id="ACN45575"/>
    </conflict>
</comment>
<name>ARNB_SALPC</name>
<keyword id="KW-0032">Aminotransferase</keyword>
<keyword id="KW-0046">Antibiotic resistance</keyword>
<keyword id="KW-0441">Lipid A biosynthesis</keyword>
<keyword id="KW-0444">Lipid biosynthesis</keyword>
<keyword id="KW-0443">Lipid metabolism</keyword>
<keyword id="KW-0448">Lipopolysaccharide biosynthesis</keyword>
<keyword id="KW-0663">Pyridoxal phosphate</keyword>
<keyword id="KW-0808">Transferase</keyword>
<evidence type="ECO:0000255" key="1">
    <source>
        <dbReference type="HAMAP-Rule" id="MF_01167"/>
    </source>
</evidence>
<evidence type="ECO:0000305" key="2"/>
<dbReference type="EC" id="2.6.1.87" evidence="1"/>
<dbReference type="EMBL" id="CP000857">
    <property type="protein sequence ID" value="ACN45575.1"/>
    <property type="status" value="ALT_INIT"/>
    <property type="molecule type" value="Genomic_DNA"/>
</dbReference>
<dbReference type="RefSeq" id="WP_001279284.1">
    <property type="nucleotide sequence ID" value="NC_012125.1"/>
</dbReference>
<dbReference type="SMR" id="C0Q071"/>
<dbReference type="KEGG" id="sei:SPC_1414"/>
<dbReference type="HOGENOM" id="CLU_033332_0_3_6"/>
<dbReference type="UniPathway" id="UPA00030"/>
<dbReference type="UniPathway" id="UPA00032">
    <property type="reaction ID" value="UER00493"/>
</dbReference>
<dbReference type="Proteomes" id="UP000001599">
    <property type="component" value="Chromosome"/>
</dbReference>
<dbReference type="GO" id="GO:0016020">
    <property type="term" value="C:membrane"/>
    <property type="evidence" value="ECO:0007669"/>
    <property type="project" value="GOC"/>
</dbReference>
<dbReference type="GO" id="GO:0030170">
    <property type="term" value="F:pyridoxal phosphate binding"/>
    <property type="evidence" value="ECO:0007669"/>
    <property type="project" value="TreeGrafter"/>
</dbReference>
<dbReference type="GO" id="GO:0099620">
    <property type="term" value="F:UDP-4-amino-4-deoxy-L-arabinose aminotransferase"/>
    <property type="evidence" value="ECO:0007669"/>
    <property type="project" value="UniProtKB-EC"/>
</dbReference>
<dbReference type="GO" id="GO:0009245">
    <property type="term" value="P:lipid A biosynthetic process"/>
    <property type="evidence" value="ECO:0007669"/>
    <property type="project" value="UniProtKB-KW"/>
</dbReference>
<dbReference type="GO" id="GO:0009103">
    <property type="term" value="P:lipopolysaccharide biosynthetic process"/>
    <property type="evidence" value="ECO:0007669"/>
    <property type="project" value="UniProtKB-UniRule"/>
</dbReference>
<dbReference type="GO" id="GO:0046677">
    <property type="term" value="P:response to antibiotic"/>
    <property type="evidence" value="ECO:0007669"/>
    <property type="project" value="UniProtKB-KW"/>
</dbReference>
<dbReference type="CDD" id="cd00616">
    <property type="entry name" value="AHBA_syn"/>
    <property type="match status" value="1"/>
</dbReference>
<dbReference type="FunFam" id="3.40.640.10:FF:000040">
    <property type="entry name" value="UDP-4-amino-4-deoxy-L-arabinose--oxoglutarate aminotransferase"/>
    <property type="match status" value="1"/>
</dbReference>
<dbReference type="FunFam" id="3.90.1150.10:FF:000030">
    <property type="entry name" value="UDP-4-amino-4-deoxy-L-arabinose--oxoglutarate aminotransferase"/>
    <property type="match status" value="1"/>
</dbReference>
<dbReference type="Gene3D" id="3.90.1150.10">
    <property type="entry name" value="Aspartate Aminotransferase, domain 1"/>
    <property type="match status" value="1"/>
</dbReference>
<dbReference type="Gene3D" id="3.40.640.10">
    <property type="entry name" value="Type I PLP-dependent aspartate aminotransferase-like (Major domain)"/>
    <property type="match status" value="1"/>
</dbReference>
<dbReference type="HAMAP" id="MF_01167">
    <property type="entry name" value="ArnB_transfer"/>
    <property type="match status" value="1"/>
</dbReference>
<dbReference type="InterPro" id="IPR022850">
    <property type="entry name" value="ArnB_NH2Trfase"/>
</dbReference>
<dbReference type="InterPro" id="IPR000653">
    <property type="entry name" value="DegT/StrS_aminotransferase"/>
</dbReference>
<dbReference type="InterPro" id="IPR015424">
    <property type="entry name" value="PyrdxlP-dep_Trfase"/>
</dbReference>
<dbReference type="InterPro" id="IPR015421">
    <property type="entry name" value="PyrdxlP-dep_Trfase_major"/>
</dbReference>
<dbReference type="InterPro" id="IPR015422">
    <property type="entry name" value="PyrdxlP-dep_Trfase_small"/>
</dbReference>
<dbReference type="NCBIfam" id="NF008658">
    <property type="entry name" value="PRK11658.1"/>
    <property type="match status" value="1"/>
</dbReference>
<dbReference type="PANTHER" id="PTHR30244">
    <property type="entry name" value="TRANSAMINASE"/>
    <property type="match status" value="1"/>
</dbReference>
<dbReference type="PANTHER" id="PTHR30244:SF41">
    <property type="entry name" value="UDP-4-AMINO-4-DEOXY-L-ARABINOSE--OXOGLUTARATE AMINOTRANSFERASE"/>
    <property type="match status" value="1"/>
</dbReference>
<dbReference type="Pfam" id="PF01041">
    <property type="entry name" value="DegT_DnrJ_EryC1"/>
    <property type="match status" value="1"/>
</dbReference>
<dbReference type="PIRSF" id="PIRSF000390">
    <property type="entry name" value="PLP_StrS"/>
    <property type="match status" value="1"/>
</dbReference>
<dbReference type="SUPFAM" id="SSF53383">
    <property type="entry name" value="PLP-dependent transferases"/>
    <property type="match status" value="1"/>
</dbReference>
<organism>
    <name type="scientific">Salmonella paratyphi C (strain RKS4594)</name>
    <dbReference type="NCBI Taxonomy" id="476213"/>
    <lineage>
        <taxon>Bacteria</taxon>
        <taxon>Pseudomonadati</taxon>
        <taxon>Pseudomonadota</taxon>
        <taxon>Gammaproteobacteria</taxon>
        <taxon>Enterobacterales</taxon>
        <taxon>Enterobacteriaceae</taxon>
        <taxon>Salmonella</taxon>
    </lineage>
</organism>
<sequence>MSDFLPFSRPAMGAEELAAVKTVLDSGWITTGPKNQELEAAFCRLTGNQYAVAVSSATAGMHIALMALGIGEGDEVITPSMTWVSTLNMIVLLGANPVMVDVDRDTLMVTPEHIEAAITPQTKAIIPVHYAGAPADLDAIYALGERYGIPVIEDAAHATGTSYKGRHIGARGTAIFSFHAIKNITCAEGGIVVTDNPQFADKLRSLKFHGLGVDAWDRQSGGRAPQAEVLAPGYKYNLPDLNAAIALAQLQKLDALNARRAAIAAQYHQAMADLPFQPLSLPSWEHIHAWHLFIIRVDEARCGITRDALMASLKTKGIGTGLHFRAAHTQKYYRERFPTLTLPDTEWNSERICSLPLFPDMTESDFDRVITALHQIAGQ</sequence>
<protein>
    <recommendedName>
        <fullName evidence="1">UDP-4-amino-4-deoxy-L-arabinose--oxoglutarate aminotransferase</fullName>
        <ecNumber evidence="1">2.6.1.87</ecNumber>
    </recommendedName>
    <alternativeName>
        <fullName evidence="1">UDP-(beta-L-threo-pentapyranosyl-4''-ulose diphosphate) aminotransferase</fullName>
        <shortName evidence="1">UDP-Ara4O aminotransferase</shortName>
    </alternativeName>
    <alternativeName>
        <fullName evidence="1">UDP-4-amino-4-deoxy-L-arabinose aminotransferase</fullName>
    </alternativeName>
</protein>
<proteinExistence type="inferred from homology"/>
<reference key="1">
    <citation type="journal article" date="2009" name="PLoS ONE">
        <title>Salmonella paratyphi C: genetic divergence from Salmonella choleraesuis and pathogenic convergence with Salmonella typhi.</title>
        <authorList>
            <person name="Liu W.-Q."/>
            <person name="Feng Y."/>
            <person name="Wang Y."/>
            <person name="Zou Q.-H."/>
            <person name="Chen F."/>
            <person name="Guo J.-T."/>
            <person name="Peng Y.-H."/>
            <person name="Jin Y."/>
            <person name="Li Y.-G."/>
            <person name="Hu S.-N."/>
            <person name="Johnston R.N."/>
            <person name="Liu G.-R."/>
            <person name="Liu S.-L."/>
        </authorList>
    </citation>
    <scope>NUCLEOTIDE SEQUENCE [LARGE SCALE GENOMIC DNA]</scope>
    <source>
        <strain>RKS4594</strain>
    </source>
</reference>
<accession>C0Q071</accession>
<gene>
    <name evidence="1" type="primary">arnB</name>
    <name type="ordered locus">SPC_1414</name>
</gene>
<feature type="chain" id="PRO_0000380541" description="UDP-4-amino-4-deoxy-L-arabinose--oxoglutarate aminotransferase">
    <location>
        <begin position="1"/>
        <end position="379"/>
    </location>
</feature>
<feature type="modified residue" description="N6-(pyridoxal phosphate)lysine" evidence="1">
    <location>
        <position position="182"/>
    </location>
</feature>